<gene>
    <name evidence="5" type="primary">dao-4</name>
    <name evidence="5" type="ORF">ZC373.6</name>
</gene>
<feature type="signal peptide" evidence="1">
    <location>
        <begin position="1"/>
        <end position="21"/>
    </location>
</feature>
<feature type="chain" id="PRO_5004201494" description="Protein dao-4" evidence="1">
    <location>
        <begin position="22"/>
        <end position="217"/>
    </location>
</feature>
<evidence type="ECO:0000255" key="1"/>
<evidence type="ECO:0000269" key="2">
    <source>
    </source>
</evidence>
<evidence type="ECO:0000305" key="3"/>
<evidence type="ECO:0000312" key="4">
    <source>
        <dbReference type="Proteomes" id="UP000001940"/>
    </source>
</evidence>
<evidence type="ECO:0000312" key="5">
    <source>
        <dbReference type="WormBase" id="ZC373.6"/>
    </source>
</evidence>
<keyword id="KW-0539">Nucleus</keyword>
<keyword id="KW-1185">Reference proteome</keyword>
<keyword id="KW-0964">Secreted</keyword>
<keyword id="KW-0732">Signal</keyword>
<name>DAO4_CAEEL</name>
<sequence>MKIALYSILLITVCYLSSTDAYLFDPKAVDALLREIRARLQATGKEPHARKIEQETEEIKKEELMQAEDVEGSGSGEEIEGSGEVISTITGVPIMDNEEKKDLKPENFPRPEPIFDKYGNLKSKDKLEALTYSNFKKQAPATLQDHYNLNPTGTLQMLQGLDIHGGSGGYHRALSGGYLPPSTYDPYNVNWHSYGDEGVKMKDKAISVFRRVIAPGR</sequence>
<protein>
    <recommendedName>
        <fullName evidence="3">Protein dao-4</fullName>
    </recommendedName>
    <alternativeName>
        <fullName evidence="5">Dauer or aging adult overexpression 4</fullName>
    </alternativeName>
</protein>
<comment type="function">
    <text evidence="2">Probably acts downstream of the Wnt signaling pathway.</text>
</comment>
<comment type="subcellular location">
    <subcellularLocation>
        <location evidence="2">Nucleus</location>
    </subcellularLocation>
    <subcellularLocation>
        <location evidence="3">Secreted</location>
    </subcellularLocation>
</comment>
<comment type="developmental stage">
    <text evidence="2">Expressed in the seam cells, and in the hyp7 syncytial hypodermis in the mid-L4 larval stage (PubMed:24569038). Not expressed in the cells of the developing vulva (PubMed:24569038).</text>
</comment>
<comment type="disruption phenotype">
    <text evidence="2">RNAi-mediated knockdown causes dumpy body shape (PubMed:24569038). Defects in cuticle integrity (PubMed:24569038).</text>
</comment>
<accession>Q23262</accession>
<reference evidence="4" key="1">
    <citation type="journal article" date="1998" name="Science">
        <title>Genome sequence of the nematode C. elegans: a platform for investigating biology.</title>
        <authorList>
            <consortium name="The C. elegans sequencing consortium"/>
        </authorList>
    </citation>
    <scope>NUCLEOTIDE SEQUENCE [LARGE SCALE GENOMIC DNA]</scope>
    <source>
        <strain evidence="4">Bristol N2</strain>
    </source>
</reference>
<reference evidence="3" key="2">
    <citation type="journal article" date="2014" name="G3 (Bethesda)">
        <title>Use of an activated beta-catenin to identify Wnt pathway target genes in caenorhabditis elegans, including a subset of collagen genes expressed in late larval development.</title>
        <authorList>
            <person name="Jackson B.M."/>
            <person name="Abete-Luzi P."/>
            <person name="Krause M.W."/>
            <person name="Eisenmann D.M."/>
        </authorList>
    </citation>
    <scope>FUNCTION</scope>
    <scope>SUBCELLULAR LOCATION</scope>
    <scope>DEVELOPMENTAL STAGE</scope>
    <scope>DISRUPTION PHENOTYPE</scope>
</reference>
<proteinExistence type="evidence at transcript level"/>
<organism evidence="4">
    <name type="scientific">Caenorhabditis elegans</name>
    <dbReference type="NCBI Taxonomy" id="6239"/>
    <lineage>
        <taxon>Eukaryota</taxon>
        <taxon>Metazoa</taxon>
        <taxon>Ecdysozoa</taxon>
        <taxon>Nematoda</taxon>
        <taxon>Chromadorea</taxon>
        <taxon>Rhabditida</taxon>
        <taxon>Rhabditina</taxon>
        <taxon>Rhabditomorpha</taxon>
        <taxon>Rhabditoidea</taxon>
        <taxon>Rhabditidae</taxon>
        <taxon>Peloderinae</taxon>
        <taxon>Caenorhabditis</taxon>
    </lineage>
</organism>
<dbReference type="EMBL" id="BX284606">
    <property type="protein sequence ID" value="CAA88978.1"/>
    <property type="molecule type" value="Genomic_DNA"/>
</dbReference>
<dbReference type="PIR" id="T27524">
    <property type="entry name" value="T27524"/>
</dbReference>
<dbReference type="RefSeq" id="NP_509691.1">
    <property type="nucleotide sequence ID" value="NM_077290.8"/>
</dbReference>
<dbReference type="SMR" id="Q23262"/>
<dbReference type="FunCoup" id="Q23262">
    <property type="interactions" value="1552"/>
</dbReference>
<dbReference type="STRING" id="6239.ZC373.6.1"/>
<dbReference type="PaxDb" id="6239-ZC373.6"/>
<dbReference type="PeptideAtlas" id="Q23262"/>
<dbReference type="EnsemblMetazoa" id="ZC373.6.1">
    <property type="protein sequence ID" value="ZC373.6.1"/>
    <property type="gene ID" value="WBGene00000930"/>
</dbReference>
<dbReference type="GeneID" id="191146"/>
<dbReference type="KEGG" id="cel:CELE_ZC373.6"/>
<dbReference type="UCSC" id="ZC373.6">
    <property type="organism name" value="c. elegans"/>
</dbReference>
<dbReference type="AGR" id="WB:WBGene00000930"/>
<dbReference type="CTD" id="191146"/>
<dbReference type="WormBase" id="ZC373.6">
    <property type="protein sequence ID" value="CE02379"/>
    <property type="gene ID" value="WBGene00000930"/>
    <property type="gene designation" value="dao-4"/>
</dbReference>
<dbReference type="eggNOG" id="ENOG502TH6U">
    <property type="taxonomic scope" value="Eukaryota"/>
</dbReference>
<dbReference type="HOGENOM" id="CLU_1278637_0_0_1"/>
<dbReference type="InParanoid" id="Q23262"/>
<dbReference type="OMA" id="NVNWHSY"/>
<dbReference type="OrthoDB" id="5825387at2759"/>
<dbReference type="PRO" id="PR:Q23262"/>
<dbReference type="Proteomes" id="UP000001940">
    <property type="component" value="Chromosome X"/>
</dbReference>
<dbReference type="Bgee" id="WBGene00000930">
    <property type="expression patterns" value="Expressed in larva and 1 other cell type or tissue"/>
</dbReference>
<dbReference type="GO" id="GO:0005576">
    <property type="term" value="C:extracellular region"/>
    <property type="evidence" value="ECO:0007669"/>
    <property type="project" value="UniProtKB-SubCell"/>
</dbReference>
<dbReference type="GO" id="GO:0005634">
    <property type="term" value="C:nucleus"/>
    <property type="evidence" value="ECO:0007669"/>
    <property type="project" value="UniProtKB-SubCell"/>
</dbReference>
<dbReference type="GO" id="GO:0040002">
    <property type="term" value="P:collagen and cuticulin-based cuticle development"/>
    <property type="evidence" value="ECO:0000315"/>
    <property type="project" value="UniProtKB"/>
</dbReference>